<accession>O31653</accession>
<dbReference type="EMBL" id="AL009126">
    <property type="protein sequence ID" value="CAB13162.1"/>
    <property type="molecule type" value="Genomic_DNA"/>
</dbReference>
<dbReference type="PIR" id="E69871">
    <property type="entry name" value="E69871"/>
</dbReference>
<dbReference type="RefSeq" id="NP_389188.1">
    <property type="nucleotide sequence ID" value="NC_000964.3"/>
</dbReference>
<dbReference type="RefSeq" id="WP_009967080.1">
    <property type="nucleotide sequence ID" value="NZ_OZ025638.1"/>
</dbReference>
<dbReference type="SMR" id="O31653"/>
<dbReference type="FunCoup" id="O31653">
    <property type="interactions" value="3"/>
</dbReference>
<dbReference type="IntAct" id="O31653">
    <property type="interactions" value="4"/>
</dbReference>
<dbReference type="PaxDb" id="224308-BSU13050"/>
<dbReference type="EnsemblBacteria" id="CAB13162">
    <property type="protein sequence ID" value="CAB13162"/>
    <property type="gene ID" value="BSU_13050"/>
</dbReference>
<dbReference type="GeneID" id="937994"/>
<dbReference type="KEGG" id="bsu:BSU13050"/>
<dbReference type="PATRIC" id="fig|224308.179.peg.1417"/>
<dbReference type="InParanoid" id="O31653"/>
<dbReference type="OrthoDB" id="2929986at2"/>
<dbReference type="BioCyc" id="BSUB:BSU13050-MONOMER"/>
<dbReference type="Proteomes" id="UP000001570">
    <property type="component" value="Chromosome"/>
</dbReference>
<protein>
    <recommendedName>
        <fullName>Uncharacterized protein YkzH</fullName>
    </recommendedName>
</protein>
<organism>
    <name type="scientific">Bacillus subtilis (strain 168)</name>
    <dbReference type="NCBI Taxonomy" id="224308"/>
    <lineage>
        <taxon>Bacteria</taxon>
        <taxon>Bacillati</taxon>
        <taxon>Bacillota</taxon>
        <taxon>Bacilli</taxon>
        <taxon>Bacillales</taxon>
        <taxon>Bacillaceae</taxon>
        <taxon>Bacillus</taxon>
    </lineage>
</organism>
<keyword id="KW-0175">Coiled coil</keyword>
<keyword id="KW-1185">Reference proteome</keyword>
<gene>
    <name type="primary">ykzH</name>
    <name type="ordered locus">BSU13050</name>
</gene>
<proteinExistence type="predicted"/>
<name>YKZH_BACSU</name>
<reference key="1">
    <citation type="journal article" date="1997" name="Nature">
        <title>The complete genome sequence of the Gram-positive bacterium Bacillus subtilis.</title>
        <authorList>
            <person name="Kunst F."/>
            <person name="Ogasawara N."/>
            <person name="Moszer I."/>
            <person name="Albertini A.M."/>
            <person name="Alloni G."/>
            <person name="Azevedo V."/>
            <person name="Bertero M.G."/>
            <person name="Bessieres P."/>
            <person name="Bolotin A."/>
            <person name="Borchert S."/>
            <person name="Borriss R."/>
            <person name="Boursier L."/>
            <person name="Brans A."/>
            <person name="Braun M."/>
            <person name="Brignell S.C."/>
            <person name="Bron S."/>
            <person name="Brouillet S."/>
            <person name="Bruschi C.V."/>
            <person name="Caldwell B."/>
            <person name="Capuano V."/>
            <person name="Carter N.M."/>
            <person name="Choi S.-K."/>
            <person name="Codani J.-J."/>
            <person name="Connerton I.F."/>
            <person name="Cummings N.J."/>
            <person name="Daniel R.A."/>
            <person name="Denizot F."/>
            <person name="Devine K.M."/>
            <person name="Duesterhoeft A."/>
            <person name="Ehrlich S.D."/>
            <person name="Emmerson P.T."/>
            <person name="Entian K.-D."/>
            <person name="Errington J."/>
            <person name="Fabret C."/>
            <person name="Ferrari E."/>
            <person name="Foulger D."/>
            <person name="Fritz C."/>
            <person name="Fujita M."/>
            <person name="Fujita Y."/>
            <person name="Fuma S."/>
            <person name="Galizzi A."/>
            <person name="Galleron N."/>
            <person name="Ghim S.-Y."/>
            <person name="Glaser P."/>
            <person name="Goffeau A."/>
            <person name="Golightly E.J."/>
            <person name="Grandi G."/>
            <person name="Guiseppi G."/>
            <person name="Guy B.J."/>
            <person name="Haga K."/>
            <person name="Haiech J."/>
            <person name="Harwood C.R."/>
            <person name="Henaut A."/>
            <person name="Hilbert H."/>
            <person name="Holsappel S."/>
            <person name="Hosono S."/>
            <person name="Hullo M.-F."/>
            <person name="Itaya M."/>
            <person name="Jones L.-M."/>
            <person name="Joris B."/>
            <person name="Karamata D."/>
            <person name="Kasahara Y."/>
            <person name="Klaerr-Blanchard M."/>
            <person name="Klein C."/>
            <person name="Kobayashi Y."/>
            <person name="Koetter P."/>
            <person name="Koningstein G."/>
            <person name="Krogh S."/>
            <person name="Kumano M."/>
            <person name="Kurita K."/>
            <person name="Lapidus A."/>
            <person name="Lardinois S."/>
            <person name="Lauber J."/>
            <person name="Lazarevic V."/>
            <person name="Lee S.-M."/>
            <person name="Levine A."/>
            <person name="Liu H."/>
            <person name="Masuda S."/>
            <person name="Mauel C."/>
            <person name="Medigue C."/>
            <person name="Medina N."/>
            <person name="Mellado R.P."/>
            <person name="Mizuno M."/>
            <person name="Moestl D."/>
            <person name="Nakai S."/>
            <person name="Noback M."/>
            <person name="Noone D."/>
            <person name="O'Reilly M."/>
            <person name="Ogawa K."/>
            <person name="Ogiwara A."/>
            <person name="Oudega B."/>
            <person name="Park S.-H."/>
            <person name="Parro V."/>
            <person name="Pohl T.M."/>
            <person name="Portetelle D."/>
            <person name="Porwollik S."/>
            <person name="Prescott A.M."/>
            <person name="Presecan E."/>
            <person name="Pujic P."/>
            <person name="Purnelle B."/>
            <person name="Rapoport G."/>
            <person name="Rey M."/>
            <person name="Reynolds S."/>
            <person name="Rieger M."/>
            <person name="Rivolta C."/>
            <person name="Rocha E."/>
            <person name="Roche B."/>
            <person name="Rose M."/>
            <person name="Sadaie Y."/>
            <person name="Sato T."/>
            <person name="Scanlan E."/>
            <person name="Schleich S."/>
            <person name="Schroeter R."/>
            <person name="Scoffone F."/>
            <person name="Sekiguchi J."/>
            <person name="Sekowska A."/>
            <person name="Seror S.J."/>
            <person name="Serror P."/>
            <person name="Shin B.-S."/>
            <person name="Soldo B."/>
            <person name="Sorokin A."/>
            <person name="Tacconi E."/>
            <person name="Takagi T."/>
            <person name="Takahashi H."/>
            <person name="Takemaru K."/>
            <person name="Takeuchi M."/>
            <person name="Tamakoshi A."/>
            <person name="Tanaka T."/>
            <person name="Terpstra P."/>
            <person name="Tognoni A."/>
            <person name="Tosato V."/>
            <person name="Uchiyama S."/>
            <person name="Vandenbol M."/>
            <person name="Vannier F."/>
            <person name="Vassarotti A."/>
            <person name="Viari A."/>
            <person name="Wambutt R."/>
            <person name="Wedler E."/>
            <person name="Wedler H."/>
            <person name="Weitzenegger T."/>
            <person name="Winters P."/>
            <person name="Wipat A."/>
            <person name="Yamamoto H."/>
            <person name="Yamane K."/>
            <person name="Yasumoto K."/>
            <person name="Yata K."/>
            <person name="Yoshida K."/>
            <person name="Yoshikawa H.-F."/>
            <person name="Zumstein E."/>
            <person name="Yoshikawa H."/>
            <person name="Danchin A."/>
        </authorList>
    </citation>
    <scope>NUCLEOTIDE SEQUENCE [LARGE SCALE GENOMIC DNA]</scope>
    <source>
        <strain>168</strain>
    </source>
</reference>
<feature type="chain" id="PRO_0000049618" description="Uncharacterized protein YkzH">
    <location>
        <begin position="1"/>
        <end position="74"/>
    </location>
</feature>
<feature type="coiled-coil region" evidence="1">
    <location>
        <begin position="25"/>
        <end position="62"/>
    </location>
</feature>
<sequence length="74" mass="8541">MKNQKSNTLWPFDLPLAPQPEGYQQQTIDRLAGLELRMKQLIRAIEVNNELLRTMQEQQNRVCTNGSGSVIVRM</sequence>
<evidence type="ECO:0000255" key="1"/>